<protein>
    <recommendedName>
        <fullName evidence="1">Trigger factor</fullName>
        <shortName evidence="1">TF</shortName>
        <ecNumber evidence="1">5.2.1.8</ecNumber>
    </recommendedName>
    <alternativeName>
        <fullName evidence="1">PPIase</fullName>
    </alternativeName>
</protein>
<feature type="chain" id="PRO_0000256594" description="Trigger factor">
    <location>
        <begin position="1"/>
        <end position="436"/>
    </location>
</feature>
<feature type="domain" description="PPIase FKBP-type" evidence="1">
    <location>
        <begin position="161"/>
        <end position="246"/>
    </location>
</feature>
<dbReference type="EC" id="5.2.1.8" evidence="1"/>
<dbReference type="EMBL" id="CP000058">
    <property type="protein sequence ID" value="AAZ35278.1"/>
    <property type="molecule type" value="Genomic_DNA"/>
</dbReference>
<dbReference type="RefSeq" id="WP_011168166.1">
    <property type="nucleotide sequence ID" value="NC_005773.3"/>
</dbReference>
<dbReference type="SMR" id="Q48KZ1"/>
<dbReference type="KEGG" id="psp:PSPPH_1697"/>
<dbReference type="eggNOG" id="COG0544">
    <property type="taxonomic scope" value="Bacteria"/>
</dbReference>
<dbReference type="HOGENOM" id="CLU_033058_2_0_6"/>
<dbReference type="Proteomes" id="UP000000551">
    <property type="component" value="Chromosome"/>
</dbReference>
<dbReference type="GO" id="GO:0005737">
    <property type="term" value="C:cytoplasm"/>
    <property type="evidence" value="ECO:0007669"/>
    <property type="project" value="UniProtKB-SubCell"/>
</dbReference>
<dbReference type="GO" id="GO:0003755">
    <property type="term" value="F:peptidyl-prolyl cis-trans isomerase activity"/>
    <property type="evidence" value="ECO:0007669"/>
    <property type="project" value="UniProtKB-UniRule"/>
</dbReference>
<dbReference type="GO" id="GO:0044183">
    <property type="term" value="F:protein folding chaperone"/>
    <property type="evidence" value="ECO:0007669"/>
    <property type="project" value="TreeGrafter"/>
</dbReference>
<dbReference type="GO" id="GO:0043022">
    <property type="term" value="F:ribosome binding"/>
    <property type="evidence" value="ECO:0007669"/>
    <property type="project" value="TreeGrafter"/>
</dbReference>
<dbReference type="GO" id="GO:0051083">
    <property type="term" value="P:'de novo' cotranslational protein folding"/>
    <property type="evidence" value="ECO:0007669"/>
    <property type="project" value="TreeGrafter"/>
</dbReference>
<dbReference type="GO" id="GO:0051301">
    <property type="term" value="P:cell division"/>
    <property type="evidence" value="ECO:0007669"/>
    <property type="project" value="UniProtKB-KW"/>
</dbReference>
<dbReference type="GO" id="GO:0061077">
    <property type="term" value="P:chaperone-mediated protein folding"/>
    <property type="evidence" value="ECO:0007669"/>
    <property type="project" value="TreeGrafter"/>
</dbReference>
<dbReference type="GO" id="GO:0015031">
    <property type="term" value="P:protein transport"/>
    <property type="evidence" value="ECO:0007669"/>
    <property type="project" value="UniProtKB-UniRule"/>
</dbReference>
<dbReference type="GO" id="GO:0043335">
    <property type="term" value="P:protein unfolding"/>
    <property type="evidence" value="ECO:0007669"/>
    <property type="project" value="TreeGrafter"/>
</dbReference>
<dbReference type="FunFam" id="3.10.50.40:FF:000001">
    <property type="entry name" value="Trigger factor"/>
    <property type="match status" value="1"/>
</dbReference>
<dbReference type="FunFam" id="3.30.70.1050:FF:000001">
    <property type="entry name" value="Trigger factor"/>
    <property type="match status" value="1"/>
</dbReference>
<dbReference type="Gene3D" id="3.10.50.40">
    <property type="match status" value="1"/>
</dbReference>
<dbReference type="Gene3D" id="3.30.70.1050">
    <property type="entry name" value="Trigger factor ribosome-binding domain"/>
    <property type="match status" value="1"/>
</dbReference>
<dbReference type="Gene3D" id="1.10.3120.10">
    <property type="entry name" value="Trigger factor, C-terminal domain"/>
    <property type="match status" value="1"/>
</dbReference>
<dbReference type="HAMAP" id="MF_00303">
    <property type="entry name" value="Trigger_factor_Tig"/>
    <property type="match status" value="1"/>
</dbReference>
<dbReference type="InterPro" id="IPR046357">
    <property type="entry name" value="PPIase_dom_sf"/>
</dbReference>
<dbReference type="InterPro" id="IPR001179">
    <property type="entry name" value="PPIase_FKBP_dom"/>
</dbReference>
<dbReference type="InterPro" id="IPR005215">
    <property type="entry name" value="Trig_fac"/>
</dbReference>
<dbReference type="InterPro" id="IPR008880">
    <property type="entry name" value="Trigger_fac_C"/>
</dbReference>
<dbReference type="InterPro" id="IPR037041">
    <property type="entry name" value="Trigger_fac_C_sf"/>
</dbReference>
<dbReference type="InterPro" id="IPR008881">
    <property type="entry name" value="Trigger_fac_ribosome-bd_bac"/>
</dbReference>
<dbReference type="InterPro" id="IPR036611">
    <property type="entry name" value="Trigger_fac_ribosome-bd_sf"/>
</dbReference>
<dbReference type="InterPro" id="IPR027304">
    <property type="entry name" value="Trigger_fact/SurA_dom_sf"/>
</dbReference>
<dbReference type="NCBIfam" id="TIGR00115">
    <property type="entry name" value="tig"/>
    <property type="match status" value="1"/>
</dbReference>
<dbReference type="PANTHER" id="PTHR30560">
    <property type="entry name" value="TRIGGER FACTOR CHAPERONE AND PEPTIDYL-PROLYL CIS/TRANS ISOMERASE"/>
    <property type="match status" value="1"/>
</dbReference>
<dbReference type="PANTHER" id="PTHR30560:SF3">
    <property type="entry name" value="TRIGGER FACTOR-LIKE PROTEIN TIG, CHLOROPLASTIC"/>
    <property type="match status" value="1"/>
</dbReference>
<dbReference type="Pfam" id="PF00254">
    <property type="entry name" value="FKBP_C"/>
    <property type="match status" value="1"/>
</dbReference>
<dbReference type="Pfam" id="PF05698">
    <property type="entry name" value="Trigger_C"/>
    <property type="match status" value="1"/>
</dbReference>
<dbReference type="Pfam" id="PF05697">
    <property type="entry name" value="Trigger_N"/>
    <property type="match status" value="1"/>
</dbReference>
<dbReference type="PIRSF" id="PIRSF003095">
    <property type="entry name" value="Trigger_factor"/>
    <property type="match status" value="1"/>
</dbReference>
<dbReference type="SUPFAM" id="SSF54534">
    <property type="entry name" value="FKBP-like"/>
    <property type="match status" value="1"/>
</dbReference>
<dbReference type="SUPFAM" id="SSF109998">
    <property type="entry name" value="Triger factor/SurA peptide-binding domain-like"/>
    <property type="match status" value="1"/>
</dbReference>
<dbReference type="SUPFAM" id="SSF102735">
    <property type="entry name" value="Trigger factor ribosome-binding domain"/>
    <property type="match status" value="1"/>
</dbReference>
<dbReference type="PROSITE" id="PS50059">
    <property type="entry name" value="FKBP_PPIASE"/>
    <property type="match status" value="1"/>
</dbReference>
<sequence>MQVSVENTSALERRMTIGVPAERIETEVNKRLQQTARKAKIPGFRPGKVPMSVIRQRYEDGARQEALGDLIQATFYEAVVEQKLNPAGAPAVEPKSFEKGKDLEYVATFEVFPEFTVAGFDTIAVERLSADVVDSDLDNMLEVLRKQNVRFEVADRAAQNEDQLNIDFVGKVDGEVFAGGSATATQLVLGSGRMIPGFEDGLVGAKAGEERVLNVTFPEDYQNLELAGKAAEFTVTVNTVSEPKLPELNEEFFKQFGIKETGIEGFRTEVRKNMERELRQAIKSKVKNQVMDGLLAANPIEVPKALLENEVNRLRVQAVQQFGGNIKPDQLPAELFEEQAKRRVELGLIVAEVVKQFDLKPDDARVREMIQEMASAYQEPEQVVAWYYKNEQQMNEVRSVVLEEQVVDTVLQKASVTDKSVSYEEAVKPVEAPKAD</sequence>
<proteinExistence type="inferred from homology"/>
<reference key="1">
    <citation type="journal article" date="2005" name="J. Bacteriol.">
        <title>Whole-genome sequence analysis of Pseudomonas syringae pv. phaseolicola 1448A reveals divergence among pathovars in genes involved in virulence and transposition.</title>
        <authorList>
            <person name="Joardar V."/>
            <person name="Lindeberg M."/>
            <person name="Jackson R.W."/>
            <person name="Selengut J."/>
            <person name="Dodson R."/>
            <person name="Brinkac L.M."/>
            <person name="Daugherty S.C."/>
            <person name="DeBoy R.T."/>
            <person name="Durkin A.S."/>
            <person name="Gwinn Giglio M."/>
            <person name="Madupu R."/>
            <person name="Nelson W.C."/>
            <person name="Rosovitz M.J."/>
            <person name="Sullivan S.A."/>
            <person name="Crabtree J."/>
            <person name="Creasy T."/>
            <person name="Davidsen T.M."/>
            <person name="Haft D.H."/>
            <person name="Zafar N."/>
            <person name="Zhou L."/>
            <person name="Halpin R."/>
            <person name="Holley T."/>
            <person name="Khouri H.M."/>
            <person name="Feldblyum T.V."/>
            <person name="White O."/>
            <person name="Fraser C.M."/>
            <person name="Chatterjee A.K."/>
            <person name="Cartinhour S."/>
            <person name="Schneider D."/>
            <person name="Mansfield J.W."/>
            <person name="Collmer A."/>
            <person name="Buell R."/>
        </authorList>
    </citation>
    <scope>NUCLEOTIDE SEQUENCE [LARGE SCALE GENOMIC DNA]</scope>
    <source>
        <strain>1448A / Race 6</strain>
    </source>
</reference>
<accession>Q48KZ1</accession>
<name>TIG_PSE14</name>
<organism>
    <name type="scientific">Pseudomonas savastanoi pv. phaseolicola (strain 1448A / Race 6)</name>
    <name type="common">Pseudomonas syringae pv. phaseolicola (strain 1448A / Race 6)</name>
    <dbReference type="NCBI Taxonomy" id="264730"/>
    <lineage>
        <taxon>Bacteria</taxon>
        <taxon>Pseudomonadati</taxon>
        <taxon>Pseudomonadota</taxon>
        <taxon>Gammaproteobacteria</taxon>
        <taxon>Pseudomonadales</taxon>
        <taxon>Pseudomonadaceae</taxon>
        <taxon>Pseudomonas</taxon>
    </lineage>
</organism>
<comment type="function">
    <text evidence="1">Involved in protein export. Acts as a chaperone by maintaining the newly synthesized protein in an open conformation. Functions as a peptidyl-prolyl cis-trans isomerase.</text>
</comment>
<comment type="catalytic activity">
    <reaction evidence="1">
        <text>[protein]-peptidylproline (omega=180) = [protein]-peptidylproline (omega=0)</text>
        <dbReference type="Rhea" id="RHEA:16237"/>
        <dbReference type="Rhea" id="RHEA-COMP:10747"/>
        <dbReference type="Rhea" id="RHEA-COMP:10748"/>
        <dbReference type="ChEBI" id="CHEBI:83833"/>
        <dbReference type="ChEBI" id="CHEBI:83834"/>
        <dbReference type="EC" id="5.2.1.8"/>
    </reaction>
</comment>
<comment type="subcellular location">
    <subcellularLocation>
        <location>Cytoplasm</location>
    </subcellularLocation>
    <text evidence="1">About half TF is bound to the ribosome near the polypeptide exit tunnel while the other half is free in the cytoplasm.</text>
</comment>
<comment type="domain">
    <text evidence="1">Consists of 3 domains; the N-terminus binds the ribosome, the middle domain has PPIase activity, while the C-terminus has intrinsic chaperone activity on its own.</text>
</comment>
<comment type="similarity">
    <text evidence="1">Belongs to the FKBP-type PPIase family. Tig subfamily.</text>
</comment>
<keyword id="KW-0131">Cell cycle</keyword>
<keyword id="KW-0132">Cell division</keyword>
<keyword id="KW-0143">Chaperone</keyword>
<keyword id="KW-0963">Cytoplasm</keyword>
<keyword id="KW-0413">Isomerase</keyword>
<keyword id="KW-0697">Rotamase</keyword>
<evidence type="ECO:0000255" key="1">
    <source>
        <dbReference type="HAMAP-Rule" id="MF_00303"/>
    </source>
</evidence>
<gene>
    <name evidence="1" type="primary">tig</name>
    <name type="ordered locus">PSPPH_1697</name>
</gene>